<protein>
    <recommendedName>
        <fullName evidence="1">Protein AaeX</fullName>
    </recommendedName>
</protein>
<name>AAEX_SHIDS</name>
<feature type="chain" id="PRO_0000300577" description="Protein AaeX">
    <location>
        <begin position="1"/>
        <end position="67"/>
    </location>
</feature>
<feature type="transmembrane region" description="Helical" evidence="1">
    <location>
        <begin position="3"/>
        <end position="23"/>
    </location>
</feature>
<feature type="transmembrane region" description="Helical" evidence="1">
    <location>
        <begin position="43"/>
        <end position="63"/>
    </location>
</feature>
<reference key="1">
    <citation type="journal article" date="2005" name="Nucleic Acids Res.">
        <title>Genome dynamics and diversity of Shigella species, the etiologic agents of bacillary dysentery.</title>
        <authorList>
            <person name="Yang F."/>
            <person name="Yang J."/>
            <person name="Zhang X."/>
            <person name="Chen L."/>
            <person name="Jiang Y."/>
            <person name="Yan Y."/>
            <person name="Tang X."/>
            <person name="Wang J."/>
            <person name="Xiong Z."/>
            <person name="Dong J."/>
            <person name="Xue Y."/>
            <person name="Zhu Y."/>
            <person name="Xu X."/>
            <person name="Sun L."/>
            <person name="Chen S."/>
            <person name="Nie H."/>
            <person name="Peng J."/>
            <person name="Xu J."/>
            <person name="Wang Y."/>
            <person name="Yuan Z."/>
            <person name="Wen Y."/>
            <person name="Yao Z."/>
            <person name="Shen Y."/>
            <person name="Qiang B."/>
            <person name="Hou Y."/>
            <person name="Yu J."/>
            <person name="Jin Q."/>
        </authorList>
    </citation>
    <scope>NUCLEOTIDE SEQUENCE [LARGE SCALE GENOMIC DNA]</scope>
    <source>
        <strain>Sd197</strain>
    </source>
</reference>
<evidence type="ECO:0000255" key="1">
    <source>
        <dbReference type="HAMAP-Rule" id="MF_01546"/>
    </source>
</evidence>
<evidence type="ECO:0000305" key="2"/>
<sequence length="67" mass="7847">MSLFPVIVVFGLSFPPIFFELLLSLAIFWLVRRVLVPTGIYDFVWHPALFNTALYCCLFYLISRLFV</sequence>
<gene>
    <name evidence="1" type="primary">aaeX</name>
    <name type="ordered locus">SDY_3418</name>
</gene>
<proteinExistence type="inferred from homology"/>
<dbReference type="EMBL" id="CP000034">
    <property type="protein sequence ID" value="ABB63408.1"/>
    <property type="status" value="ALT_INIT"/>
    <property type="molecule type" value="Genomic_DNA"/>
</dbReference>
<dbReference type="RefSeq" id="WP_000051841.1">
    <property type="nucleotide sequence ID" value="NC_007606.1"/>
</dbReference>
<dbReference type="RefSeq" id="YP_404899.2">
    <property type="nucleotide sequence ID" value="NC_007606.1"/>
</dbReference>
<dbReference type="STRING" id="300267.SDY_3418"/>
<dbReference type="EnsemblBacteria" id="ABB63408">
    <property type="protein sequence ID" value="ABB63408"/>
    <property type="gene ID" value="SDY_3418"/>
</dbReference>
<dbReference type="GeneID" id="93778743"/>
<dbReference type="KEGG" id="sdy:SDY_3418"/>
<dbReference type="PATRIC" id="fig|300267.13.peg.4076"/>
<dbReference type="HOGENOM" id="CLU_188292_0_0_6"/>
<dbReference type="Proteomes" id="UP000002716">
    <property type="component" value="Chromosome"/>
</dbReference>
<dbReference type="GO" id="GO:0005886">
    <property type="term" value="C:plasma membrane"/>
    <property type="evidence" value="ECO:0007669"/>
    <property type="project" value="UniProtKB-SubCell"/>
</dbReference>
<dbReference type="HAMAP" id="MF_01546">
    <property type="entry name" value="AaeX"/>
    <property type="match status" value="1"/>
</dbReference>
<dbReference type="InterPro" id="IPR012451">
    <property type="entry name" value="DUF1656"/>
</dbReference>
<dbReference type="NCBIfam" id="NF008615">
    <property type="entry name" value="PRK11594.1"/>
    <property type="match status" value="1"/>
</dbReference>
<dbReference type="Pfam" id="PF07869">
    <property type="entry name" value="DUF1656"/>
    <property type="match status" value="1"/>
</dbReference>
<accession>Q32B97</accession>
<organism>
    <name type="scientific">Shigella dysenteriae serotype 1 (strain Sd197)</name>
    <dbReference type="NCBI Taxonomy" id="300267"/>
    <lineage>
        <taxon>Bacteria</taxon>
        <taxon>Pseudomonadati</taxon>
        <taxon>Pseudomonadota</taxon>
        <taxon>Gammaproteobacteria</taxon>
        <taxon>Enterobacterales</taxon>
        <taxon>Enterobacteriaceae</taxon>
        <taxon>Shigella</taxon>
    </lineage>
</organism>
<comment type="subcellular location">
    <subcellularLocation>
        <location evidence="1">Cell membrane</location>
        <topology evidence="1">Multi-pass membrane protein</topology>
    </subcellularLocation>
</comment>
<comment type="similarity">
    <text evidence="1">Belongs to the AaeX family.</text>
</comment>
<comment type="sequence caution" evidence="2">
    <conflict type="erroneous initiation">
        <sequence resource="EMBL-CDS" id="ABB63408"/>
    </conflict>
</comment>
<keyword id="KW-1003">Cell membrane</keyword>
<keyword id="KW-0472">Membrane</keyword>
<keyword id="KW-1185">Reference proteome</keyword>
<keyword id="KW-0812">Transmembrane</keyword>
<keyword id="KW-1133">Transmembrane helix</keyword>